<comment type="function">
    <text evidence="1">Catalyzes the ATP-dependent conversion of 7-carboxy-7-deazaguanine (CDG) to 7-cyano-7-deazaguanine (preQ(0)).</text>
</comment>
<comment type="catalytic activity">
    <reaction evidence="1">
        <text>7-carboxy-7-deazaguanine + NH4(+) + ATP = 7-cyano-7-deazaguanine + ADP + phosphate + H2O + H(+)</text>
        <dbReference type="Rhea" id="RHEA:27982"/>
        <dbReference type="ChEBI" id="CHEBI:15377"/>
        <dbReference type="ChEBI" id="CHEBI:15378"/>
        <dbReference type="ChEBI" id="CHEBI:28938"/>
        <dbReference type="ChEBI" id="CHEBI:30616"/>
        <dbReference type="ChEBI" id="CHEBI:43474"/>
        <dbReference type="ChEBI" id="CHEBI:45075"/>
        <dbReference type="ChEBI" id="CHEBI:61036"/>
        <dbReference type="ChEBI" id="CHEBI:456216"/>
        <dbReference type="EC" id="6.3.4.20"/>
    </reaction>
</comment>
<comment type="cofactor">
    <cofactor evidence="1">
        <name>Zn(2+)</name>
        <dbReference type="ChEBI" id="CHEBI:29105"/>
    </cofactor>
    <text evidence="1">Binds 1 zinc ion per subunit.</text>
</comment>
<comment type="pathway">
    <text evidence="1">Purine metabolism; 7-cyano-7-deazaguanine biosynthesis.</text>
</comment>
<comment type="similarity">
    <text evidence="1">Belongs to the QueC family.</text>
</comment>
<proteinExistence type="inferred from homology"/>
<keyword id="KW-0067">ATP-binding</keyword>
<keyword id="KW-0436">Ligase</keyword>
<keyword id="KW-0479">Metal-binding</keyword>
<keyword id="KW-0547">Nucleotide-binding</keyword>
<keyword id="KW-1185">Reference proteome</keyword>
<keyword id="KW-0862">Zinc</keyword>
<sequence>MKPKAITVLSGGLDSTVATSIYANDYDITAITFNYGQQSIKQELKHAKMICEKLDMKHIVIDLPWLKEISNSSLTTDKSIPQPSDNDLDDYDKSIETAKSVWVPARNTVFCSIALSYAESIQAKIIIVGWDYEEAVTFPDNSKEYLKSFNETIKYGSFDDIEIKAPLIDMTKEDIVKKGHEVNAPMNISYSCYVGCDTHCGVCESCKRRKRAFTRANVTDYTEYEK</sequence>
<accession>Q2NF51</accession>
<feature type="chain" id="PRO_0000246981" description="7-cyano-7-deazaguanine synthase">
    <location>
        <begin position="1"/>
        <end position="226"/>
    </location>
</feature>
<feature type="binding site" evidence="1">
    <location>
        <begin position="9"/>
        <end position="19"/>
    </location>
    <ligand>
        <name>ATP</name>
        <dbReference type="ChEBI" id="CHEBI:30616"/>
    </ligand>
</feature>
<feature type="binding site" evidence="1">
    <location>
        <position position="192"/>
    </location>
    <ligand>
        <name>Zn(2+)</name>
        <dbReference type="ChEBI" id="CHEBI:29105"/>
    </ligand>
</feature>
<feature type="binding site" evidence="1">
    <location>
        <position position="200"/>
    </location>
    <ligand>
        <name>Zn(2+)</name>
        <dbReference type="ChEBI" id="CHEBI:29105"/>
    </ligand>
</feature>
<feature type="binding site" evidence="1">
    <location>
        <position position="203"/>
    </location>
    <ligand>
        <name>Zn(2+)</name>
        <dbReference type="ChEBI" id="CHEBI:29105"/>
    </ligand>
</feature>
<feature type="binding site" evidence="1">
    <location>
        <position position="206"/>
    </location>
    <ligand>
        <name>Zn(2+)</name>
        <dbReference type="ChEBI" id="CHEBI:29105"/>
    </ligand>
</feature>
<gene>
    <name evidence="1" type="primary">queC</name>
    <name type="ordered locus">Msp_1171</name>
</gene>
<organism>
    <name type="scientific">Methanosphaera stadtmanae (strain ATCC 43021 / DSM 3091 / JCM 11832 / MCB-3)</name>
    <dbReference type="NCBI Taxonomy" id="339860"/>
    <lineage>
        <taxon>Archaea</taxon>
        <taxon>Methanobacteriati</taxon>
        <taxon>Methanobacteriota</taxon>
        <taxon>Methanomada group</taxon>
        <taxon>Methanobacteria</taxon>
        <taxon>Methanobacteriales</taxon>
        <taxon>Methanobacteriaceae</taxon>
        <taxon>Methanosphaera</taxon>
    </lineage>
</organism>
<dbReference type="EC" id="6.3.4.20" evidence="1"/>
<dbReference type="EMBL" id="CP000102">
    <property type="protein sequence ID" value="ABC57552.1"/>
    <property type="molecule type" value="Genomic_DNA"/>
</dbReference>
<dbReference type="RefSeq" id="WP_011406751.1">
    <property type="nucleotide sequence ID" value="NC_007681.1"/>
</dbReference>
<dbReference type="SMR" id="Q2NF51"/>
<dbReference type="STRING" id="339860.Msp_1171"/>
<dbReference type="GeneID" id="41325740"/>
<dbReference type="KEGG" id="mst:Msp_1171"/>
<dbReference type="eggNOG" id="arCOG00039">
    <property type="taxonomic scope" value="Archaea"/>
</dbReference>
<dbReference type="HOGENOM" id="CLU_081854_1_0_2"/>
<dbReference type="OrthoDB" id="6532at2157"/>
<dbReference type="UniPathway" id="UPA00391"/>
<dbReference type="Proteomes" id="UP000001931">
    <property type="component" value="Chromosome"/>
</dbReference>
<dbReference type="GO" id="GO:0005524">
    <property type="term" value="F:ATP binding"/>
    <property type="evidence" value="ECO:0007669"/>
    <property type="project" value="UniProtKB-UniRule"/>
</dbReference>
<dbReference type="GO" id="GO:0016879">
    <property type="term" value="F:ligase activity, forming carbon-nitrogen bonds"/>
    <property type="evidence" value="ECO:0007669"/>
    <property type="project" value="UniProtKB-UniRule"/>
</dbReference>
<dbReference type="GO" id="GO:0008270">
    <property type="term" value="F:zinc ion binding"/>
    <property type="evidence" value="ECO:0007669"/>
    <property type="project" value="UniProtKB-UniRule"/>
</dbReference>
<dbReference type="CDD" id="cd01995">
    <property type="entry name" value="QueC-like"/>
    <property type="match status" value="1"/>
</dbReference>
<dbReference type="Gene3D" id="3.40.50.620">
    <property type="entry name" value="HUPs"/>
    <property type="match status" value="1"/>
</dbReference>
<dbReference type="HAMAP" id="MF_01633">
    <property type="entry name" value="QueC"/>
    <property type="match status" value="1"/>
</dbReference>
<dbReference type="InterPro" id="IPR018317">
    <property type="entry name" value="QueC"/>
</dbReference>
<dbReference type="InterPro" id="IPR014729">
    <property type="entry name" value="Rossmann-like_a/b/a_fold"/>
</dbReference>
<dbReference type="NCBIfam" id="TIGR00364">
    <property type="entry name" value="7-cyano-7-deazaguanine synthase QueC"/>
    <property type="match status" value="1"/>
</dbReference>
<dbReference type="PANTHER" id="PTHR42914">
    <property type="entry name" value="7-CYANO-7-DEAZAGUANINE SYNTHASE"/>
    <property type="match status" value="1"/>
</dbReference>
<dbReference type="PANTHER" id="PTHR42914:SF1">
    <property type="entry name" value="7-CYANO-7-DEAZAGUANINE SYNTHASE"/>
    <property type="match status" value="1"/>
</dbReference>
<dbReference type="Pfam" id="PF06508">
    <property type="entry name" value="QueC"/>
    <property type="match status" value="1"/>
</dbReference>
<dbReference type="PIRSF" id="PIRSF006293">
    <property type="entry name" value="ExsB"/>
    <property type="match status" value="1"/>
</dbReference>
<dbReference type="SUPFAM" id="SSF52402">
    <property type="entry name" value="Adenine nucleotide alpha hydrolases-like"/>
    <property type="match status" value="1"/>
</dbReference>
<reference key="1">
    <citation type="journal article" date="2006" name="J. Bacteriol.">
        <title>The genome sequence of Methanosphaera stadtmanae reveals why this human intestinal archaeon is restricted to methanol and H2 for methane formation and ATP synthesis.</title>
        <authorList>
            <person name="Fricke W.F."/>
            <person name="Seedorf H."/>
            <person name="Henne A."/>
            <person name="Kruer M."/>
            <person name="Liesegang H."/>
            <person name="Hedderich R."/>
            <person name="Gottschalk G."/>
            <person name="Thauer R.K."/>
        </authorList>
    </citation>
    <scope>NUCLEOTIDE SEQUENCE [LARGE SCALE GENOMIC DNA]</scope>
    <source>
        <strain>ATCC 43021 / DSM 3091 / JCM 11832 / MCB-3</strain>
    </source>
</reference>
<name>QUEC_METST</name>
<protein>
    <recommendedName>
        <fullName evidence="1">7-cyano-7-deazaguanine synthase</fullName>
        <ecNumber evidence="1">6.3.4.20</ecNumber>
    </recommendedName>
    <alternativeName>
        <fullName evidence="1">7-cyano-7-carbaguanine synthase</fullName>
    </alternativeName>
    <alternativeName>
        <fullName evidence="1">Archaeosine biosynthesis protein QueC</fullName>
    </alternativeName>
    <alternativeName>
        <fullName evidence="1">PreQ(0) synthase</fullName>
    </alternativeName>
</protein>
<evidence type="ECO:0000255" key="1">
    <source>
        <dbReference type="HAMAP-Rule" id="MF_01633"/>
    </source>
</evidence>